<name>LOLD_COXBU</name>
<keyword id="KW-0067">ATP-binding</keyword>
<keyword id="KW-0997">Cell inner membrane</keyword>
<keyword id="KW-1003">Cell membrane</keyword>
<keyword id="KW-0472">Membrane</keyword>
<keyword id="KW-0547">Nucleotide-binding</keyword>
<keyword id="KW-1185">Reference proteome</keyword>
<keyword id="KW-1278">Translocase</keyword>
<keyword id="KW-0813">Transport</keyword>
<dbReference type="EC" id="7.6.2.-" evidence="1"/>
<dbReference type="EMBL" id="AE016828">
    <property type="protein sequence ID" value="AAO90521.1"/>
    <property type="molecule type" value="Genomic_DNA"/>
</dbReference>
<dbReference type="RefSeq" id="NP_820007.1">
    <property type="nucleotide sequence ID" value="NC_002971.4"/>
</dbReference>
<dbReference type="RefSeq" id="WP_005772368.1">
    <property type="nucleotide sequence ID" value="NZ_CDBG01000001.1"/>
</dbReference>
<dbReference type="SMR" id="Q83CV2"/>
<dbReference type="STRING" id="227377.CBU_1000"/>
<dbReference type="EnsemblBacteria" id="AAO90521">
    <property type="protein sequence ID" value="AAO90521"/>
    <property type="gene ID" value="CBU_1000"/>
</dbReference>
<dbReference type="GeneID" id="1208896"/>
<dbReference type="KEGG" id="cbu:CBU_1000"/>
<dbReference type="PATRIC" id="fig|227377.7.peg.993"/>
<dbReference type="eggNOG" id="COG1136">
    <property type="taxonomic scope" value="Bacteria"/>
</dbReference>
<dbReference type="HOGENOM" id="CLU_000604_1_22_6"/>
<dbReference type="OrthoDB" id="9801477at2"/>
<dbReference type="Proteomes" id="UP000002671">
    <property type="component" value="Chromosome"/>
</dbReference>
<dbReference type="GO" id="GO:0005886">
    <property type="term" value="C:plasma membrane"/>
    <property type="evidence" value="ECO:0000318"/>
    <property type="project" value="GO_Central"/>
</dbReference>
<dbReference type="GO" id="GO:0005524">
    <property type="term" value="F:ATP binding"/>
    <property type="evidence" value="ECO:0007669"/>
    <property type="project" value="UniProtKB-KW"/>
</dbReference>
<dbReference type="GO" id="GO:0016887">
    <property type="term" value="F:ATP hydrolysis activity"/>
    <property type="evidence" value="ECO:0007669"/>
    <property type="project" value="InterPro"/>
</dbReference>
<dbReference type="GO" id="GO:0022857">
    <property type="term" value="F:transmembrane transporter activity"/>
    <property type="evidence" value="ECO:0000318"/>
    <property type="project" value="GO_Central"/>
</dbReference>
<dbReference type="GO" id="GO:0044874">
    <property type="term" value="P:lipoprotein localization to outer membrane"/>
    <property type="evidence" value="ECO:0000318"/>
    <property type="project" value="GO_Central"/>
</dbReference>
<dbReference type="GO" id="GO:0089705">
    <property type="term" value="P:protein localization to outer membrane"/>
    <property type="evidence" value="ECO:0000318"/>
    <property type="project" value="GO_Central"/>
</dbReference>
<dbReference type="GO" id="GO:0055085">
    <property type="term" value="P:transmembrane transport"/>
    <property type="evidence" value="ECO:0000318"/>
    <property type="project" value="GO_Central"/>
</dbReference>
<dbReference type="CDD" id="cd03255">
    <property type="entry name" value="ABC_MJ0796_LolCDE_FtsE"/>
    <property type="match status" value="1"/>
</dbReference>
<dbReference type="FunFam" id="3.40.50.300:FF:000230">
    <property type="entry name" value="Lipoprotein-releasing system ATP-binding protein LolD"/>
    <property type="match status" value="1"/>
</dbReference>
<dbReference type="Gene3D" id="3.40.50.300">
    <property type="entry name" value="P-loop containing nucleotide triphosphate hydrolases"/>
    <property type="match status" value="1"/>
</dbReference>
<dbReference type="InterPro" id="IPR003593">
    <property type="entry name" value="AAA+_ATPase"/>
</dbReference>
<dbReference type="InterPro" id="IPR003439">
    <property type="entry name" value="ABC_transporter-like_ATP-bd"/>
</dbReference>
<dbReference type="InterPro" id="IPR017871">
    <property type="entry name" value="ABC_transporter-like_CS"/>
</dbReference>
<dbReference type="InterPro" id="IPR015854">
    <property type="entry name" value="ABC_transpr_LolD-like"/>
</dbReference>
<dbReference type="InterPro" id="IPR011924">
    <property type="entry name" value="LolD_lipo_ATP-bd"/>
</dbReference>
<dbReference type="InterPro" id="IPR017911">
    <property type="entry name" value="MacB-like_ATP-bd"/>
</dbReference>
<dbReference type="InterPro" id="IPR027417">
    <property type="entry name" value="P-loop_NTPase"/>
</dbReference>
<dbReference type="NCBIfam" id="TIGR02211">
    <property type="entry name" value="LolD_lipo_ex"/>
    <property type="match status" value="1"/>
</dbReference>
<dbReference type="PANTHER" id="PTHR24220">
    <property type="entry name" value="IMPORT ATP-BINDING PROTEIN"/>
    <property type="match status" value="1"/>
</dbReference>
<dbReference type="PANTHER" id="PTHR24220:SF689">
    <property type="entry name" value="LIPOPROTEIN-RELEASING SYSTEM ATP-BINDING PROTEIN LOLD"/>
    <property type="match status" value="1"/>
</dbReference>
<dbReference type="Pfam" id="PF00005">
    <property type="entry name" value="ABC_tran"/>
    <property type="match status" value="1"/>
</dbReference>
<dbReference type="SMART" id="SM00382">
    <property type="entry name" value="AAA"/>
    <property type="match status" value="1"/>
</dbReference>
<dbReference type="SUPFAM" id="SSF52540">
    <property type="entry name" value="P-loop containing nucleoside triphosphate hydrolases"/>
    <property type="match status" value="1"/>
</dbReference>
<dbReference type="PROSITE" id="PS00211">
    <property type="entry name" value="ABC_TRANSPORTER_1"/>
    <property type="match status" value="1"/>
</dbReference>
<dbReference type="PROSITE" id="PS50893">
    <property type="entry name" value="ABC_TRANSPORTER_2"/>
    <property type="match status" value="1"/>
</dbReference>
<dbReference type="PROSITE" id="PS51244">
    <property type="entry name" value="LOLD"/>
    <property type="match status" value="1"/>
</dbReference>
<sequence length="233" mass="25832">MNNAPVIHCEKLSKTYVEGKLRVPVLHEVEFSVAPGERIAIVGASGAGKSTFLQLLGGLDKPSNGKIWVNGNDINQLSEREKGLLRNQHLGFVYQFHHLLPEFNALENVCIPLLVRGGIKPKHARQKASAYLEKVGLSHRQKHRVGELSGGEKQRVALARALVTEPCCVLADEPTGNLDQKTAEQVADLTLQLNRSLNISFVIVTHNREFADKMDRVLLLDKGQLQSESERNH</sequence>
<accession>Q83CV2</accession>
<feature type="chain" id="PRO_0000092433" description="Lipoprotein-releasing system ATP-binding protein LolD">
    <location>
        <begin position="1"/>
        <end position="233"/>
    </location>
</feature>
<feature type="domain" description="ABC transporter" evidence="1">
    <location>
        <begin position="7"/>
        <end position="233"/>
    </location>
</feature>
<feature type="binding site" evidence="1">
    <location>
        <begin position="43"/>
        <end position="50"/>
    </location>
    <ligand>
        <name>ATP</name>
        <dbReference type="ChEBI" id="CHEBI:30616"/>
    </ligand>
</feature>
<comment type="function">
    <text evidence="1">Part of the ABC transporter complex LolCDE involved in the translocation of mature outer membrane-directed lipoproteins, from the inner membrane to the periplasmic chaperone, LolA. Responsible for the formation of the LolA-lipoprotein complex in an ATP-dependent manner.</text>
</comment>
<comment type="subunit">
    <text evidence="1">The complex is composed of two ATP-binding proteins (LolD) and two transmembrane proteins (LolC and LolE).</text>
</comment>
<comment type="subcellular location">
    <subcellularLocation>
        <location evidence="1">Cell inner membrane</location>
        <topology evidence="1">Peripheral membrane protein</topology>
    </subcellularLocation>
</comment>
<comment type="similarity">
    <text evidence="1">Belongs to the ABC transporter superfamily. Lipoprotein translocase (TC 3.A.1.125) family.</text>
</comment>
<gene>
    <name evidence="1" type="primary">lolD</name>
    <name type="ordered locus">CBU_1000</name>
</gene>
<protein>
    <recommendedName>
        <fullName evidence="1">Lipoprotein-releasing system ATP-binding protein LolD</fullName>
        <ecNumber evidence="1">7.6.2.-</ecNumber>
    </recommendedName>
</protein>
<organism>
    <name type="scientific">Coxiella burnetii (strain RSA 493 / Nine Mile phase I)</name>
    <dbReference type="NCBI Taxonomy" id="227377"/>
    <lineage>
        <taxon>Bacteria</taxon>
        <taxon>Pseudomonadati</taxon>
        <taxon>Pseudomonadota</taxon>
        <taxon>Gammaproteobacteria</taxon>
        <taxon>Legionellales</taxon>
        <taxon>Coxiellaceae</taxon>
        <taxon>Coxiella</taxon>
    </lineage>
</organism>
<proteinExistence type="inferred from homology"/>
<evidence type="ECO:0000255" key="1">
    <source>
        <dbReference type="HAMAP-Rule" id="MF_01708"/>
    </source>
</evidence>
<reference key="1">
    <citation type="journal article" date="2003" name="Proc. Natl. Acad. Sci. U.S.A.">
        <title>Complete genome sequence of the Q-fever pathogen, Coxiella burnetii.</title>
        <authorList>
            <person name="Seshadri R."/>
            <person name="Paulsen I.T."/>
            <person name="Eisen J.A."/>
            <person name="Read T.D."/>
            <person name="Nelson K.E."/>
            <person name="Nelson W.C."/>
            <person name="Ward N.L."/>
            <person name="Tettelin H."/>
            <person name="Davidsen T.M."/>
            <person name="Beanan M.J."/>
            <person name="DeBoy R.T."/>
            <person name="Daugherty S.C."/>
            <person name="Brinkac L.M."/>
            <person name="Madupu R."/>
            <person name="Dodson R.J."/>
            <person name="Khouri H.M."/>
            <person name="Lee K.H."/>
            <person name="Carty H.A."/>
            <person name="Scanlan D."/>
            <person name="Heinzen R.A."/>
            <person name="Thompson H.A."/>
            <person name="Samuel J.E."/>
            <person name="Fraser C.M."/>
            <person name="Heidelberg J.F."/>
        </authorList>
    </citation>
    <scope>NUCLEOTIDE SEQUENCE [LARGE SCALE GENOMIC DNA]</scope>
    <source>
        <strain>RSA 493 / Nine Mile phase I</strain>
    </source>
</reference>